<evidence type="ECO:0000250" key="1"/>
<evidence type="ECO:0000250" key="2">
    <source>
        <dbReference type="UniProtKB" id="Q38997"/>
    </source>
</evidence>
<evidence type="ECO:0000250" key="3">
    <source>
        <dbReference type="UniProtKB" id="Q93V58"/>
    </source>
</evidence>
<evidence type="ECO:0000255" key="4">
    <source>
        <dbReference type="PROSITE-ProRule" id="PRU00159"/>
    </source>
</evidence>
<evidence type="ECO:0000255" key="5">
    <source>
        <dbReference type="PROSITE-ProRule" id="PRU00256"/>
    </source>
</evidence>
<evidence type="ECO:0000255" key="6">
    <source>
        <dbReference type="PROSITE-ProRule" id="PRU10027"/>
    </source>
</evidence>
<evidence type="ECO:0000269" key="7">
    <source>
    </source>
</evidence>
<evidence type="ECO:0000269" key="8">
    <source>
    </source>
</evidence>
<evidence type="ECO:0000269" key="9">
    <source>
    </source>
</evidence>
<evidence type="ECO:0000269" key="10">
    <source>
    </source>
</evidence>
<evidence type="ECO:0000269" key="11">
    <source>
    </source>
</evidence>
<evidence type="ECO:0000269" key="12">
    <source>
    </source>
</evidence>
<evidence type="ECO:0000305" key="13"/>
<feature type="chain" id="PRO_0000337209" description="CBL-interacting serine/threonine-protein kinase 6">
    <location>
        <begin position="1"/>
        <end position="441"/>
    </location>
</feature>
<feature type="domain" description="Protein kinase" evidence="4">
    <location>
        <begin position="24"/>
        <end position="278"/>
    </location>
</feature>
<feature type="domain" description="NAF" evidence="5">
    <location>
        <begin position="310"/>
        <end position="334"/>
    </location>
</feature>
<feature type="region of interest" description="Activation loop" evidence="1">
    <location>
        <begin position="164"/>
        <end position="193"/>
    </location>
</feature>
<feature type="region of interest" description="PPI" evidence="1">
    <location>
        <begin position="341"/>
        <end position="371"/>
    </location>
</feature>
<feature type="active site" description="Proton acceptor" evidence="4 6">
    <location>
        <position position="146"/>
    </location>
</feature>
<feature type="binding site" evidence="4">
    <location>
        <begin position="30"/>
        <end position="38"/>
    </location>
    <ligand>
        <name>ATP</name>
        <dbReference type="ChEBI" id="CHEBI:30616"/>
    </ligand>
</feature>
<feature type="binding site" evidence="4">
    <location>
        <position position="53"/>
    </location>
    <ligand>
        <name>ATP</name>
        <dbReference type="ChEBI" id="CHEBI:30616"/>
    </ligand>
</feature>
<feature type="modified residue" description="Phosphoserine" evidence="3">
    <location>
        <position position="168"/>
    </location>
</feature>
<feature type="modified residue" description="Phosphothreonine" evidence="2">
    <location>
        <position position="182"/>
    </location>
</feature>
<feature type="mutagenesis site" description="Increased activity and autophosphorylation." evidence="12">
    <original>T</original>
    <variation>D</variation>
    <location>
        <position position="182"/>
    </location>
</feature>
<proteinExistence type="evidence at protein level"/>
<reference key="1">
    <citation type="journal article" date="2000" name="Plant Physiol.">
        <title>Interaction specificity of Arabidopsis calcineurin B-like calcium sensors and their target kinases.</title>
        <authorList>
            <person name="Kim K.-N."/>
            <person name="Cheong Y.H."/>
            <person name="Gupta R."/>
            <person name="Luan S."/>
        </authorList>
    </citation>
    <scope>NUCLEOTIDE SEQUENCE [MRNA]</scope>
    <scope>INTERACTION WITH CBL3 AND CBL4</scope>
    <source>
        <strain>cv. Columbia</strain>
    </source>
</reference>
<reference key="2">
    <citation type="journal article" date="2001" name="Plant Cell">
        <title>Molecular characterization of functional domains in the protein kinase SOS2 that is required for plant salt tolerance.</title>
        <authorList>
            <person name="Guo Y."/>
            <person name="Halfter U."/>
            <person name="Ishitani M."/>
            <person name="Zhu J.-K."/>
        </authorList>
    </citation>
    <scope>NUCLEOTIDE SEQUENCE [MRNA]</scope>
    <scope>TISSUE SPECIFICITY</scope>
    <source>
        <strain>cv. Columbia</strain>
    </source>
</reference>
<reference key="3">
    <citation type="journal article" date="1999" name="Nature">
        <title>Sequence and analysis of chromosome 4 of the plant Arabidopsis thaliana.</title>
        <authorList>
            <person name="Mayer K.F.X."/>
            <person name="Schueller C."/>
            <person name="Wambutt R."/>
            <person name="Murphy G."/>
            <person name="Volckaert G."/>
            <person name="Pohl T."/>
            <person name="Duesterhoeft A."/>
            <person name="Stiekema W."/>
            <person name="Entian K.-D."/>
            <person name="Terryn N."/>
            <person name="Harris B."/>
            <person name="Ansorge W."/>
            <person name="Brandt P."/>
            <person name="Grivell L.A."/>
            <person name="Rieger M."/>
            <person name="Weichselgartner M."/>
            <person name="de Simone V."/>
            <person name="Obermaier B."/>
            <person name="Mache R."/>
            <person name="Mueller M."/>
            <person name="Kreis M."/>
            <person name="Delseny M."/>
            <person name="Puigdomenech P."/>
            <person name="Watson M."/>
            <person name="Schmidtheini T."/>
            <person name="Reichert B."/>
            <person name="Portetelle D."/>
            <person name="Perez-Alonso M."/>
            <person name="Boutry M."/>
            <person name="Bancroft I."/>
            <person name="Vos P."/>
            <person name="Hoheisel J."/>
            <person name="Zimmermann W."/>
            <person name="Wedler H."/>
            <person name="Ridley P."/>
            <person name="Langham S.-A."/>
            <person name="McCullagh B."/>
            <person name="Bilham L."/>
            <person name="Robben J."/>
            <person name="van der Schueren J."/>
            <person name="Grymonprez B."/>
            <person name="Chuang Y.-J."/>
            <person name="Vandenbussche F."/>
            <person name="Braeken M."/>
            <person name="Weltjens I."/>
            <person name="Voet M."/>
            <person name="Bastiaens I."/>
            <person name="Aert R."/>
            <person name="Defoor E."/>
            <person name="Weitzenegger T."/>
            <person name="Bothe G."/>
            <person name="Ramsperger U."/>
            <person name="Hilbert H."/>
            <person name="Braun M."/>
            <person name="Holzer E."/>
            <person name="Brandt A."/>
            <person name="Peters S."/>
            <person name="van Staveren M."/>
            <person name="Dirkse W."/>
            <person name="Mooijman P."/>
            <person name="Klein Lankhorst R."/>
            <person name="Rose M."/>
            <person name="Hauf J."/>
            <person name="Koetter P."/>
            <person name="Berneiser S."/>
            <person name="Hempel S."/>
            <person name="Feldpausch M."/>
            <person name="Lamberth S."/>
            <person name="Van den Daele H."/>
            <person name="De Keyser A."/>
            <person name="Buysshaert C."/>
            <person name="Gielen J."/>
            <person name="Villarroel R."/>
            <person name="De Clercq R."/>
            <person name="van Montagu M."/>
            <person name="Rogers J."/>
            <person name="Cronin A."/>
            <person name="Quail M.A."/>
            <person name="Bray-Allen S."/>
            <person name="Clark L."/>
            <person name="Doggett J."/>
            <person name="Hall S."/>
            <person name="Kay M."/>
            <person name="Lennard N."/>
            <person name="McLay K."/>
            <person name="Mayes R."/>
            <person name="Pettett A."/>
            <person name="Rajandream M.A."/>
            <person name="Lyne M."/>
            <person name="Benes V."/>
            <person name="Rechmann S."/>
            <person name="Borkova D."/>
            <person name="Bloecker H."/>
            <person name="Scharfe M."/>
            <person name="Grimm M."/>
            <person name="Loehnert T.-H."/>
            <person name="Dose S."/>
            <person name="de Haan M."/>
            <person name="Maarse A.C."/>
            <person name="Schaefer M."/>
            <person name="Mueller-Auer S."/>
            <person name="Gabel C."/>
            <person name="Fuchs M."/>
            <person name="Fartmann B."/>
            <person name="Granderath K."/>
            <person name="Dauner D."/>
            <person name="Herzl A."/>
            <person name="Neumann S."/>
            <person name="Argiriou A."/>
            <person name="Vitale D."/>
            <person name="Liguori R."/>
            <person name="Piravandi E."/>
            <person name="Massenet O."/>
            <person name="Quigley F."/>
            <person name="Clabauld G."/>
            <person name="Muendlein A."/>
            <person name="Felber R."/>
            <person name="Schnabl S."/>
            <person name="Hiller R."/>
            <person name="Schmidt W."/>
            <person name="Lecharny A."/>
            <person name="Aubourg S."/>
            <person name="Chefdor F."/>
            <person name="Cooke R."/>
            <person name="Berger C."/>
            <person name="Monfort A."/>
            <person name="Casacuberta E."/>
            <person name="Gibbons T."/>
            <person name="Weber N."/>
            <person name="Vandenbol M."/>
            <person name="Bargues M."/>
            <person name="Terol J."/>
            <person name="Torres A."/>
            <person name="Perez-Perez A."/>
            <person name="Purnelle B."/>
            <person name="Bent E."/>
            <person name="Johnson S."/>
            <person name="Tacon D."/>
            <person name="Jesse T."/>
            <person name="Heijnen L."/>
            <person name="Schwarz S."/>
            <person name="Scholler P."/>
            <person name="Heber S."/>
            <person name="Francs P."/>
            <person name="Bielke C."/>
            <person name="Frishman D."/>
            <person name="Haase D."/>
            <person name="Lemcke K."/>
            <person name="Mewes H.-W."/>
            <person name="Stocker S."/>
            <person name="Zaccaria P."/>
            <person name="Bevan M."/>
            <person name="Wilson R.K."/>
            <person name="de la Bastide M."/>
            <person name="Habermann K."/>
            <person name="Parnell L."/>
            <person name="Dedhia N."/>
            <person name="Gnoj L."/>
            <person name="Schutz K."/>
            <person name="Huang E."/>
            <person name="Spiegel L."/>
            <person name="Sekhon M."/>
            <person name="Murray J."/>
            <person name="Sheet P."/>
            <person name="Cordes M."/>
            <person name="Abu-Threideh J."/>
            <person name="Stoneking T."/>
            <person name="Kalicki J."/>
            <person name="Graves T."/>
            <person name="Harmon G."/>
            <person name="Edwards J."/>
            <person name="Latreille P."/>
            <person name="Courtney L."/>
            <person name="Cloud J."/>
            <person name="Abbott A."/>
            <person name="Scott K."/>
            <person name="Johnson D."/>
            <person name="Minx P."/>
            <person name="Bentley D."/>
            <person name="Fulton B."/>
            <person name="Miller N."/>
            <person name="Greco T."/>
            <person name="Kemp K."/>
            <person name="Kramer J."/>
            <person name="Fulton L."/>
            <person name="Mardis E."/>
            <person name="Dante M."/>
            <person name="Pepin K."/>
            <person name="Hillier L.W."/>
            <person name="Nelson J."/>
            <person name="Spieth J."/>
            <person name="Ryan E."/>
            <person name="Andrews S."/>
            <person name="Geisel C."/>
            <person name="Layman D."/>
            <person name="Du H."/>
            <person name="Ali J."/>
            <person name="Berghoff A."/>
            <person name="Jones K."/>
            <person name="Drone K."/>
            <person name="Cotton M."/>
            <person name="Joshu C."/>
            <person name="Antonoiu B."/>
            <person name="Zidanic M."/>
            <person name="Strong C."/>
            <person name="Sun H."/>
            <person name="Lamar B."/>
            <person name="Yordan C."/>
            <person name="Ma P."/>
            <person name="Zhong J."/>
            <person name="Preston R."/>
            <person name="Vil D."/>
            <person name="Shekher M."/>
            <person name="Matero A."/>
            <person name="Shah R."/>
            <person name="Swaby I.K."/>
            <person name="O'Shaughnessy A."/>
            <person name="Rodriguez M."/>
            <person name="Hoffman J."/>
            <person name="Till S."/>
            <person name="Granat S."/>
            <person name="Shohdy N."/>
            <person name="Hasegawa A."/>
            <person name="Hameed A."/>
            <person name="Lodhi M."/>
            <person name="Johnson A."/>
            <person name="Chen E."/>
            <person name="Marra M.A."/>
            <person name="Martienssen R."/>
            <person name="McCombie W.R."/>
        </authorList>
    </citation>
    <scope>NUCLEOTIDE SEQUENCE [LARGE SCALE GENOMIC DNA]</scope>
    <source>
        <strain>cv. Columbia</strain>
    </source>
</reference>
<reference key="4">
    <citation type="journal article" date="2017" name="Plant J.">
        <title>Araport11: a complete reannotation of the Arabidopsis thaliana reference genome.</title>
        <authorList>
            <person name="Cheng C.Y."/>
            <person name="Krishnakumar V."/>
            <person name="Chan A.P."/>
            <person name="Thibaud-Nissen F."/>
            <person name="Schobel S."/>
            <person name="Town C.D."/>
        </authorList>
    </citation>
    <scope>GENOME REANNOTATION</scope>
    <source>
        <strain>cv. Columbia</strain>
    </source>
</reference>
<reference key="5">
    <citation type="journal article" date="2003" name="Science">
        <title>Empirical analysis of transcriptional activity in the Arabidopsis genome.</title>
        <authorList>
            <person name="Yamada K."/>
            <person name="Lim J."/>
            <person name="Dale J.M."/>
            <person name="Chen H."/>
            <person name="Shinn P."/>
            <person name="Palm C.J."/>
            <person name="Southwick A.M."/>
            <person name="Wu H.C."/>
            <person name="Kim C.J."/>
            <person name="Nguyen M."/>
            <person name="Pham P.K."/>
            <person name="Cheuk R.F."/>
            <person name="Karlin-Newmann G."/>
            <person name="Liu S.X."/>
            <person name="Lam B."/>
            <person name="Sakano H."/>
            <person name="Wu T."/>
            <person name="Yu G."/>
            <person name="Miranda M."/>
            <person name="Quach H.L."/>
            <person name="Tripp M."/>
            <person name="Chang C.H."/>
            <person name="Lee J.M."/>
            <person name="Toriumi M.J."/>
            <person name="Chan M.M."/>
            <person name="Tang C.C."/>
            <person name="Onodera C.S."/>
            <person name="Deng J.M."/>
            <person name="Akiyama K."/>
            <person name="Ansari Y."/>
            <person name="Arakawa T."/>
            <person name="Banh J."/>
            <person name="Banno F."/>
            <person name="Bowser L."/>
            <person name="Brooks S.Y."/>
            <person name="Carninci P."/>
            <person name="Chao Q."/>
            <person name="Choy N."/>
            <person name="Enju A."/>
            <person name="Goldsmith A.D."/>
            <person name="Gurjal M."/>
            <person name="Hansen N.F."/>
            <person name="Hayashizaki Y."/>
            <person name="Johnson-Hopson C."/>
            <person name="Hsuan V.W."/>
            <person name="Iida K."/>
            <person name="Karnes M."/>
            <person name="Khan S."/>
            <person name="Koesema E."/>
            <person name="Ishida J."/>
            <person name="Jiang P.X."/>
            <person name="Jones T."/>
            <person name="Kawai J."/>
            <person name="Kamiya A."/>
            <person name="Meyers C."/>
            <person name="Nakajima M."/>
            <person name="Narusaka M."/>
            <person name="Seki M."/>
            <person name="Sakurai T."/>
            <person name="Satou M."/>
            <person name="Tamse R."/>
            <person name="Vaysberg M."/>
            <person name="Wallender E.K."/>
            <person name="Wong C."/>
            <person name="Yamamura Y."/>
            <person name="Yuan S."/>
            <person name="Shinozaki K."/>
            <person name="Davis R.W."/>
            <person name="Theologis A."/>
            <person name="Ecker J.R."/>
        </authorList>
    </citation>
    <scope>NUCLEOTIDE SEQUENCE [LARGE SCALE MRNA]</scope>
    <source>
        <strain>cv. Columbia</strain>
    </source>
</reference>
<reference key="6">
    <citation type="journal article" date="2000" name="Proc. Natl. Acad. Sci. U.S.A.">
        <title>The Arabidopsis SOS2 protein kinase physically interacts with and is activated by the calcium-binding protein SOS3.</title>
        <authorList>
            <person name="Halfter U."/>
            <person name="Ishitani M."/>
            <person name="Zhu J.-K."/>
        </authorList>
    </citation>
    <scope>INTERACTION WITH CBL4</scope>
</reference>
<reference key="7">
    <citation type="journal article" date="2001" name="EMBO J.">
        <title>The NAF domain defines a novel protein-protein interaction module conserved in Ca(2+)-regulated kinases.</title>
        <authorList>
            <person name="Albrecht V."/>
            <person name="Ritz O."/>
            <person name="Linder S."/>
            <person name="Harter K."/>
            <person name="Kudla J."/>
        </authorList>
    </citation>
    <scope>INTERACTION WITH CBL2 AND CBL3</scope>
</reference>
<reference key="8">
    <citation type="journal article" date="2003" name="Plant Physiol.">
        <title>The Arabidopsis CDPK-SnRK superfamily of protein kinases.</title>
        <authorList>
            <person name="Hrabak E.M."/>
            <person name="Chan C.W.M."/>
            <person name="Gribskov M."/>
            <person name="Harper J.F."/>
            <person name="Choi J.H."/>
            <person name="Halford N."/>
            <person name="Kudla J."/>
            <person name="Luan S."/>
            <person name="Nimmo H.G."/>
            <person name="Sussman M.R."/>
            <person name="Thomas M."/>
            <person name="Walker-Simmons K."/>
            <person name="Zhu J.-K."/>
            <person name="Harmon A.C."/>
        </authorList>
    </citation>
    <scope>GENE FAMILY</scope>
    <scope>NOMENCLATURE</scope>
</reference>
<reference key="9">
    <citation type="journal article" date="2007" name="Proc. Natl. Acad. Sci. U.S.A.">
        <title>A protein phosphorylation/dephosphorylation network regulates a plant potassium channel.</title>
        <authorList>
            <person name="Lee S.-C."/>
            <person name="Lan W.-Z."/>
            <person name="Kim B.-G."/>
            <person name="Li L."/>
            <person name="Cheong Y.H."/>
            <person name="Pandey G.K."/>
            <person name="Lu G."/>
            <person name="Buchanan B.B."/>
            <person name="Luan S."/>
        </authorList>
    </citation>
    <scope>FUNCTION</scope>
    <scope>INTERACTION WITH AKT1; CBL1; CBL2; CBL3 AND CBL9</scope>
</reference>
<reference key="10">
    <citation type="journal article" date="2011" name="Cell Res.">
        <title>Calcium-dependent modulation and plasma membrane targeting of the AKT2 potassium channel by the CBL4/CIPK6 calcium sensor/protein kinase complex.</title>
        <authorList>
            <person name="Held K."/>
            <person name="Pascaud F."/>
            <person name="Eckert C."/>
            <person name="Gajdanowicz P."/>
            <person name="Hashimoto K."/>
            <person name="Corratge-Faillie C."/>
            <person name="Offenborn J.N."/>
            <person name="Lacombe B."/>
            <person name="Dreyer I."/>
            <person name="Thibaud J.B."/>
            <person name="Kudla J."/>
        </authorList>
    </citation>
    <scope>FUNCTION</scope>
    <scope>INTERACTION WITH CBL4 AND AKT2</scope>
    <scope>DISRUPTION PHENOTYPE</scope>
    <scope>SUBCELLULAR LOCATION</scope>
    <scope>MUTAGENESIS OF THR-182</scope>
    <scope>AUTOPHOSPHORYLATION</scope>
</reference>
<dbReference type="EC" id="2.7.11.1"/>
<dbReference type="EMBL" id="AF285106">
    <property type="protein sequence ID" value="AAF86505.1"/>
    <property type="molecule type" value="mRNA"/>
</dbReference>
<dbReference type="EMBL" id="AF339145">
    <property type="protein sequence ID" value="AAK26843.1"/>
    <property type="molecule type" value="mRNA"/>
</dbReference>
<dbReference type="EMBL" id="AL022198">
    <property type="protein sequence ID" value="CAA18197.1"/>
    <property type="molecule type" value="Genomic_DNA"/>
</dbReference>
<dbReference type="EMBL" id="AL161578">
    <property type="protein sequence ID" value="CAB79814.1"/>
    <property type="molecule type" value="Genomic_DNA"/>
</dbReference>
<dbReference type="EMBL" id="CP002687">
    <property type="protein sequence ID" value="AEE85835.1"/>
    <property type="molecule type" value="Genomic_DNA"/>
</dbReference>
<dbReference type="EMBL" id="AF436831">
    <property type="protein sequence ID" value="AAL32013.1"/>
    <property type="molecule type" value="mRNA"/>
</dbReference>
<dbReference type="EMBL" id="AY035046">
    <property type="protein sequence ID" value="AAK59551.1"/>
    <property type="molecule type" value="mRNA"/>
</dbReference>
<dbReference type="EMBL" id="AY051051">
    <property type="protein sequence ID" value="AAK93728.1"/>
    <property type="molecule type" value="mRNA"/>
</dbReference>
<dbReference type="PIR" id="E85362">
    <property type="entry name" value="E85362"/>
</dbReference>
<dbReference type="RefSeq" id="NP_194825.1">
    <property type="nucleotide sequence ID" value="NM_119244.3"/>
</dbReference>
<dbReference type="SMR" id="O65554"/>
<dbReference type="BioGRID" id="14508">
    <property type="interactions" value="17"/>
</dbReference>
<dbReference type="DIP" id="DIP-34749N"/>
<dbReference type="FunCoup" id="O65554">
    <property type="interactions" value="1032"/>
</dbReference>
<dbReference type="IntAct" id="O65554">
    <property type="interactions" value="13"/>
</dbReference>
<dbReference type="STRING" id="3702.O65554"/>
<dbReference type="iPTMnet" id="O65554"/>
<dbReference type="PaxDb" id="3702-AT4G30960.1"/>
<dbReference type="ProteomicsDB" id="246855"/>
<dbReference type="EnsemblPlants" id="AT4G30960.1">
    <property type="protein sequence ID" value="AT4G30960.1"/>
    <property type="gene ID" value="AT4G30960"/>
</dbReference>
<dbReference type="GeneID" id="829221"/>
<dbReference type="Gramene" id="AT4G30960.1">
    <property type="protein sequence ID" value="AT4G30960.1"/>
    <property type="gene ID" value="AT4G30960"/>
</dbReference>
<dbReference type="KEGG" id="ath:AT4G30960"/>
<dbReference type="Araport" id="AT4G30960"/>
<dbReference type="TAIR" id="AT4G30960">
    <property type="gene designation" value="SIP3"/>
</dbReference>
<dbReference type="eggNOG" id="KOG0583">
    <property type="taxonomic scope" value="Eukaryota"/>
</dbReference>
<dbReference type="HOGENOM" id="CLU_000288_59_0_1"/>
<dbReference type="InParanoid" id="O65554"/>
<dbReference type="OMA" id="KVEMRFA"/>
<dbReference type="OrthoDB" id="193931at2759"/>
<dbReference type="PhylomeDB" id="O65554"/>
<dbReference type="PRO" id="PR:O65554"/>
<dbReference type="Proteomes" id="UP000006548">
    <property type="component" value="Chromosome 4"/>
</dbReference>
<dbReference type="ExpressionAtlas" id="O65554">
    <property type="expression patterns" value="baseline and differential"/>
</dbReference>
<dbReference type="GO" id="GO:0005783">
    <property type="term" value="C:endoplasmic reticulum"/>
    <property type="evidence" value="ECO:0007669"/>
    <property type="project" value="UniProtKB-SubCell"/>
</dbReference>
<dbReference type="GO" id="GO:0005524">
    <property type="term" value="F:ATP binding"/>
    <property type="evidence" value="ECO:0007669"/>
    <property type="project" value="UniProtKB-KW"/>
</dbReference>
<dbReference type="GO" id="GO:0106310">
    <property type="term" value="F:protein serine kinase activity"/>
    <property type="evidence" value="ECO:0007669"/>
    <property type="project" value="RHEA"/>
</dbReference>
<dbReference type="GO" id="GO:0004674">
    <property type="term" value="F:protein serine/threonine kinase activity"/>
    <property type="evidence" value="ECO:0007669"/>
    <property type="project" value="UniProtKB-KW"/>
</dbReference>
<dbReference type="GO" id="GO:0010540">
    <property type="term" value="P:basipetal auxin transport"/>
    <property type="evidence" value="ECO:0000315"/>
    <property type="project" value="TAIR"/>
</dbReference>
<dbReference type="GO" id="GO:0042538">
    <property type="term" value="P:hyperosmotic salinity response"/>
    <property type="evidence" value="ECO:0000314"/>
    <property type="project" value="TAIR"/>
</dbReference>
<dbReference type="GO" id="GO:0051592">
    <property type="term" value="P:response to calcium ion"/>
    <property type="evidence" value="ECO:0000270"/>
    <property type="project" value="TAIR"/>
</dbReference>
<dbReference type="GO" id="GO:0009651">
    <property type="term" value="P:response to salt stress"/>
    <property type="evidence" value="ECO:0000270"/>
    <property type="project" value="TAIR"/>
</dbReference>
<dbReference type="GO" id="GO:0009414">
    <property type="term" value="P:response to water deprivation"/>
    <property type="evidence" value="ECO:0000270"/>
    <property type="project" value="TAIR"/>
</dbReference>
<dbReference type="GO" id="GO:0007165">
    <property type="term" value="P:signal transduction"/>
    <property type="evidence" value="ECO:0007669"/>
    <property type="project" value="InterPro"/>
</dbReference>
<dbReference type="CDD" id="cd12195">
    <property type="entry name" value="CIPK_C"/>
    <property type="match status" value="1"/>
</dbReference>
<dbReference type="FunFam" id="1.10.510.10:FF:000653">
    <property type="entry name" value="Non-specific serine/threonine protein kinase"/>
    <property type="match status" value="1"/>
</dbReference>
<dbReference type="FunFam" id="3.30.200.20:FF:000096">
    <property type="entry name" value="Non-specific serine/threonine protein kinase"/>
    <property type="match status" value="1"/>
</dbReference>
<dbReference type="FunFam" id="3.30.310.80:FF:000005">
    <property type="entry name" value="Non-specific serine/threonine protein kinase"/>
    <property type="match status" value="1"/>
</dbReference>
<dbReference type="Gene3D" id="3.30.310.80">
    <property type="entry name" value="Kinase associated domain 1, KA1"/>
    <property type="match status" value="1"/>
</dbReference>
<dbReference type="Gene3D" id="3.30.200.20">
    <property type="entry name" value="Phosphorylase Kinase, domain 1"/>
    <property type="match status" value="1"/>
</dbReference>
<dbReference type="Gene3D" id="1.10.510.10">
    <property type="entry name" value="Transferase(Phosphotransferase) domain 1"/>
    <property type="match status" value="1"/>
</dbReference>
<dbReference type="InterPro" id="IPR011009">
    <property type="entry name" value="Kinase-like_dom_sf"/>
</dbReference>
<dbReference type="InterPro" id="IPR018451">
    <property type="entry name" value="NAF/FISL_domain"/>
</dbReference>
<dbReference type="InterPro" id="IPR004041">
    <property type="entry name" value="NAF_dom"/>
</dbReference>
<dbReference type="InterPro" id="IPR000719">
    <property type="entry name" value="Prot_kinase_dom"/>
</dbReference>
<dbReference type="InterPro" id="IPR017441">
    <property type="entry name" value="Protein_kinase_ATP_BS"/>
</dbReference>
<dbReference type="InterPro" id="IPR008271">
    <property type="entry name" value="Ser/Thr_kinase_AS"/>
</dbReference>
<dbReference type="PANTHER" id="PTHR43895">
    <property type="entry name" value="CALCIUM/CALMODULIN-DEPENDENT PROTEIN KINASE KINASE-RELATED"/>
    <property type="match status" value="1"/>
</dbReference>
<dbReference type="PANTHER" id="PTHR43895:SF91">
    <property type="entry name" value="CBL-INTERACTING SERINE_THREONINE-PROTEIN KINASE 6"/>
    <property type="match status" value="1"/>
</dbReference>
<dbReference type="Pfam" id="PF03822">
    <property type="entry name" value="NAF"/>
    <property type="match status" value="1"/>
</dbReference>
<dbReference type="Pfam" id="PF00069">
    <property type="entry name" value="Pkinase"/>
    <property type="match status" value="1"/>
</dbReference>
<dbReference type="SMART" id="SM00220">
    <property type="entry name" value="S_TKc"/>
    <property type="match status" value="1"/>
</dbReference>
<dbReference type="SUPFAM" id="SSF56112">
    <property type="entry name" value="Protein kinase-like (PK-like)"/>
    <property type="match status" value="1"/>
</dbReference>
<dbReference type="PROSITE" id="PS50816">
    <property type="entry name" value="NAF"/>
    <property type="match status" value="1"/>
</dbReference>
<dbReference type="PROSITE" id="PS00107">
    <property type="entry name" value="PROTEIN_KINASE_ATP"/>
    <property type="match status" value="1"/>
</dbReference>
<dbReference type="PROSITE" id="PS50011">
    <property type="entry name" value="PROTEIN_KINASE_DOM"/>
    <property type="match status" value="1"/>
</dbReference>
<dbReference type="PROSITE" id="PS00108">
    <property type="entry name" value="PROTEIN_KINASE_ST"/>
    <property type="match status" value="1"/>
</dbReference>
<keyword id="KW-0067">ATP-binding</keyword>
<keyword id="KW-0256">Endoplasmic reticulum</keyword>
<keyword id="KW-0418">Kinase</keyword>
<keyword id="KW-0464">Manganese</keyword>
<keyword id="KW-0547">Nucleotide-binding</keyword>
<keyword id="KW-0597">Phosphoprotein</keyword>
<keyword id="KW-1185">Reference proteome</keyword>
<keyword id="KW-0723">Serine/threonine-protein kinase</keyword>
<keyword id="KW-0808">Transferase</keyword>
<organism>
    <name type="scientific">Arabidopsis thaliana</name>
    <name type="common">Mouse-ear cress</name>
    <dbReference type="NCBI Taxonomy" id="3702"/>
    <lineage>
        <taxon>Eukaryota</taxon>
        <taxon>Viridiplantae</taxon>
        <taxon>Streptophyta</taxon>
        <taxon>Embryophyta</taxon>
        <taxon>Tracheophyta</taxon>
        <taxon>Spermatophyta</taxon>
        <taxon>Magnoliopsida</taxon>
        <taxon>eudicotyledons</taxon>
        <taxon>Gunneridae</taxon>
        <taxon>Pentapetalae</taxon>
        <taxon>rosids</taxon>
        <taxon>malvids</taxon>
        <taxon>Brassicales</taxon>
        <taxon>Brassicaceae</taxon>
        <taxon>Camelineae</taxon>
        <taxon>Arabidopsis</taxon>
    </lineage>
</organism>
<name>CIPK6_ARATH</name>
<gene>
    <name type="primary">CIPK6</name>
    <name type="synonym">PKS4</name>
    <name type="synonym">SIP3</name>
    <name type="synonym">SnRK3.14</name>
    <name type="ordered locus">At4g30960</name>
    <name type="ORF">F6I18.130</name>
</gene>
<accession>O65554</accession>
<sequence length="441" mass="49357">MVGAKPVENGSDGGSSTGLLHGRYELGRLLGHGTFAKVYHARNIQTGKSVAMKVVGKEKVVKVGMVDQIKREISVMRMVKHPNIVELHEVMASKSKIYFAMELVRGGELFAKVAKGRLREDVARVYFQQLISAVDFCHSRGVYHRDLKPENLLLDEEGNLKVTDFGLSAFTEHLKQDGLLHTTCGTPAYVAPEVILKKGYDGAKADLWSCGVILFVLLAGYLPFQDDNLVNMYRKIYRGDFKCPGWLSSDARRLVTKLLDPNPNTRITIEKVMDSPWFKKQATRSRNEPVAATITTTEEDVDFLVHKSKEETETLNAFHIIALSEGFDLSPLFEEKKKEEKREMRFATSRPASSVISSLEEAARVGNKFDVRKSESRVRIEGKQNGRKGKLAVEAEIFAVAPSFVVVEVKKDHGDTLEYNNFCSTALRPALKDIFWTSTPA</sequence>
<comment type="function">
    <text evidence="11 12">CIPK serine-threonine protein kinases interact with CBL proteins. Binding of a CBL protein to the regulatory NAF domain of CIPK protein lead to the activation of the kinase in a calcium-dependent manner. Downstream of CBL1, CBL2, CBL3 and CBL9, regulates by phosphorylation the K(+) conductance and uptake of AKT1. Binds to CBL4 to modulate AKT2 activity by promoting a kinase interaction-dependent but phosphorylation-independent translocation of the channel to the plasma membrane.</text>
</comment>
<comment type="catalytic activity">
    <reaction>
        <text>L-seryl-[protein] + ATP = O-phospho-L-seryl-[protein] + ADP + H(+)</text>
        <dbReference type="Rhea" id="RHEA:17989"/>
        <dbReference type="Rhea" id="RHEA-COMP:9863"/>
        <dbReference type="Rhea" id="RHEA-COMP:11604"/>
        <dbReference type="ChEBI" id="CHEBI:15378"/>
        <dbReference type="ChEBI" id="CHEBI:29999"/>
        <dbReference type="ChEBI" id="CHEBI:30616"/>
        <dbReference type="ChEBI" id="CHEBI:83421"/>
        <dbReference type="ChEBI" id="CHEBI:456216"/>
        <dbReference type="EC" id="2.7.11.1"/>
    </reaction>
</comment>
<comment type="catalytic activity">
    <reaction>
        <text>L-threonyl-[protein] + ATP = O-phospho-L-threonyl-[protein] + ADP + H(+)</text>
        <dbReference type="Rhea" id="RHEA:46608"/>
        <dbReference type="Rhea" id="RHEA-COMP:11060"/>
        <dbReference type="Rhea" id="RHEA-COMP:11605"/>
        <dbReference type="ChEBI" id="CHEBI:15378"/>
        <dbReference type="ChEBI" id="CHEBI:30013"/>
        <dbReference type="ChEBI" id="CHEBI:30616"/>
        <dbReference type="ChEBI" id="CHEBI:61977"/>
        <dbReference type="ChEBI" id="CHEBI:456216"/>
        <dbReference type="EC" id="2.7.11.1"/>
    </reaction>
</comment>
<comment type="cofactor">
    <cofactor evidence="1">
        <name>Mn(2+)</name>
        <dbReference type="ChEBI" id="CHEBI:29035"/>
    </cofactor>
</comment>
<comment type="subunit">
    <text evidence="7 8 9 11 12">Part of a K(+)-channel calcium-sensing kinase/phosphatase complex composed by a calcium sensor CBL (CBL1, CBL2, CBL3 or CBL9), a kinase CIPK (CIPK6, CIPK16 or CIPK23), a phosphatase PP2C (AIP1) and a K(+)-channel (AKT1). Interacts with AKT1, AKT2,CBL1, CBL2, CBL3, CBL4/SOS3 and CBL9.</text>
</comment>
<comment type="interaction">
    <interactant intactId="EBI-537615">
        <id>O65554</id>
    </interactant>
    <interactant intactId="EBI-1235664">
        <id>P25854</id>
        <label>CAM4</label>
    </interactant>
    <organismsDiffer>false</organismsDiffer>
    <experiments>2</experiments>
</comment>
<comment type="interaction">
    <interactant intactId="EBI-537615">
        <id>O65554</id>
    </interactant>
    <interactant intactId="EBI-974530">
        <id>O81445</id>
        <label>CBL1</label>
    </interactant>
    <organismsDiffer>false</organismsDiffer>
    <experiments>3</experiments>
</comment>
<comment type="interaction">
    <interactant intactId="EBI-537615">
        <id>O65554</id>
    </interactant>
    <interactant intactId="EBI-485991">
        <id>Q8LAS7</id>
        <label>CBL2</label>
    </interactant>
    <organismsDiffer>false</organismsDiffer>
    <experiments>3</experiments>
</comment>
<comment type="interaction">
    <interactant intactId="EBI-537615">
        <id>O65554</id>
    </interactant>
    <interactant intactId="EBI-637358">
        <id>Q8LEM7</id>
        <label>CBL3</label>
    </interactant>
    <organismsDiffer>false</organismsDiffer>
    <experiments>4</experiments>
</comment>
<comment type="subcellular location">
    <subcellularLocation>
        <location evidence="12">Endoplasmic reticulum</location>
    </subcellularLocation>
    <text>Targeted to the cell membrane when interacting with CBL4 and ATK2.</text>
</comment>
<comment type="tissue specificity">
    <text evidence="10">Expressed in roots and shoots.</text>
</comment>
<comment type="domain">
    <text evidence="1">The activation loop within the kinase domain is the target of phosphorylation/activation by upstream protein kinases. The PPI motif mediates the interaction with the ABI (abscisic acid-insensitive) phosphatases (By similarity).</text>
</comment>
<comment type="PTM">
    <text>Autophosphorylated.</text>
</comment>
<comment type="disruption phenotype">
    <text evidence="12">Delayed development and flowering.</text>
</comment>
<comment type="similarity">
    <text evidence="13">Belongs to the protein kinase superfamily. CAMK Ser/Thr protein kinase family. SNF1 subfamily.</text>
</comment>
<protein>
    <recommendedName>
        <fullName>CBL-interacting serine/threonine-protein kinase 6</fullName>
        <ecNumber>2.7.11.1</ecNumber>
    </recommendedName>
    <alternativeName>
        <fullName>SNF1-related kinase 3.14</fullName>
    </alternativeName>
    <alternativeName>
        <fullName>SOS2-like protein kinase PKS4</fullName>
    </alternativeName>
    <alternativeName>
        <fullName>SOS3-interacting protein 3</fullName>
    </alternativeName>
</protein>